<organism>
    <name type="scientific">Nitrosomonas eutropha (strain DSM 101675 / C91 / Nm57)</name>
    <dbReference type="NCBI Taxonomy" id="335283"/>
    <lineage>
        <taxon>Bacteria</taxon>
        <taxon>Pseudomonadati</taxon>
        <taxon>Pseudomonadota</taxon>
        <taxon>Betaproteobacteria</taxon>
        <taxon>Nitrosomonadales</taxon>
        <taxon>Nitrosomonadaceae</taxon>
        <taxon>Nitrosomonas</taxon>
    </lineage>
</organism>
<proteinExistence type="inferred from homology"/>
<evidence type="ECO:0000255" key="1">
    <source>
        <dbReference type="HAMAP-Rule" id="MF_00171"/>
    </source>
</evidence>
<accession>Q0AGX7</accession>
<gene>
    <name evidence="1" type="primary">truA</name>
    <name type="ordered locus">Neut_1150</name>
</gene>
<sequence length="277" mass="31527">MKIVLILEYDGRGYCGWQKQPDRISVQSRLESALSRIASSQIQVVAAGRTDAGVHALCQVVHFETHVIRPLTAWVRGANALLPDDISVLWASEVNDDFHARFSATERTYLYYLLSRPARPGIFQGKTGWTHYSLDLEKMQTAARFLIGEHDFSAFRSAECQAKNAIRKLVRLDISQSEQFFVFEFCANAFLHHMVRNILGALIYIGQGKYPPEWIQILLGKRDRTLAAPTFSPDGLYLAGVRYDARWNLPTFNVIRPENVINMIASFKYSQNWAGLR</sequence>
<keyword id="KW-0413">Isomerase</keyword>
<keyword id="KW-0819">tRNA processing</keyword>
<comment type="function">
    <text evidence="1">Formation of pseudouridine at positions 38, 39 and 40 in the anticodon stem and loop of transfer RNAs.</text>
</comment>
<comment type="catalytic activity">
    <reaction evidence="1">
        <text>uridine(38/39/40) in tRNA = pseudouridine(38/39/40) in tRNA</text>
        <dbReference type="Rhea" id="RHEA:22376"/>
        <dbReference type="Rhea" id="RHEA-COMP:10085"/>
        <dbReference type="Rhea" id="RHEA-COMP:10087"/>
        <dbReference type="ChEBI" id="CHEBI:65314"/>
        <dbReference type="ChEBI" id="CHEBI:65315"/>
        <dbReference type="EC" id="5.4.99.12"/>
    </reaction>
</comment>
<comment type="subunit">
    <text evidence="1">Homodimer.</text>
</comment>
<comment type="similarity">
    <text evidence="1">Belongs to the tRNA pseudouridine synthase TruA family.</text>
</comment>
<reference key="1">
    <citation type="journal article" date="2007" name="Environ. Microbiol.">
        <title>Whole-genome analysis of the ammonia-oxidizing bacterium, Nitrosomonas eutropha C91: implications for niche adaptation.</title>
        <authorList>
            <person name="Stein L.Y."/>
            <person name="Arp D.J."/>
            <person name="Berube P.M."/>
            <person name="Chain P.S."/>
            <person name="Hauser L."/>
            <person name="Jetten M.S."/>
            <person name="Klotz M.G."/>
            <person name="Larimer F.W."/>
            <person name="Norton J.M."/>
            <person name="Op den Camp H.J.M."/>
            <person name="Shin M."/>
            <person name="Wei X."/>
        </authorList>
    </citation>
    <scope>NUCLEOTIDE SEQUENCE [LARGE SCALE GENOMIC DNA]</scope>
    <source>
        <strain>DSM 101675 / C91 / Nm57</strain>
    </source>
</reference>
<feature type="chain" id="PRO_1000017122" description="tRNA pseudouridine synthase A">
    <location>
        <begin position="1"/>
        <end position="277"/>
    </location>
</feature>
<feature type="active site" description="Nucleophile" evidence="1">
    <location>
        <position position="51"/>
    </location>
</feature>
<feature type="binding site" evidence="1">
    <location>
        <position position="109"/>
    </location>
    <ligand>
        <name>substrate</name>
    </ligand>
</feature>
<protein>
    <recommendedName>
        <fullName evidence="1">tRNA pseudouridine synthase A</fullName>
        <ecNumber evidence="1">5.4.99.12</ecNumber>
    </recommendedName>
    <alternativeName>
        <fullName evidence="1">tRNA pseudouridine(38-40) synthase</fullName>
    </alternativeName>
    <alternativeName>
        <fullName evidence="1">tRNA pseudouridylate synthase I</fullName>
    </alternativeName>
    <alternativeName>
        <fullName evidence="1">tRNA-uridine isomerase I</fullName>
    </alternativeName>
</protein>
<name>TRUA_NITEC</name>
<dbReference type="EC" id="5.4.99.12" evidence="1"/>
<dbReference type="EMBL" id="CP000450">
    <property type="protein sequence ID" value="ABI59405.1"/>
    <property type="molecule type" value="Genomic_DNA"/>
</dbReference>
<dbReference type="RefSeq" id="WP_011634225.1">
    <property type="nucleotide sequence ID" value="NC_008344.1"/>
</dbReference>
<dbReference type="SMR" id="Q0AGX7"/>
<dbReference type="STRING" id="335283.Neut_1150"/>
<dbReference type="KEGG" id="net:Neut_1150"/>
<dbReference type="eggNOG" id="COG0101">
    <property type="taxonomic scope" value="Bacteria"/>
</dbReference>
<dbReference type="HOGENOM" id="CLU_014673_0_2_4"/>
<dbReference type="OrthoDB" id="9811823at2"/>
<dbReference type="Proteomes" id="UP000001966">
    <property type="component" value="Chromosome"/>
</dbReference>
<dbReference type="GO" id="GO:0003723">
    <property type="term" value="F:RNA binding"/>
    <property type="evidence" value="ECO:0007669"/>
    <property type="project" value="InterPro"/>
</dbReference>
<dbReference type="GO" id="GO:0160147">
    <property type="term" value="F:tRNA pseudouridine(38-40) synthase activity"/>
    <property type="evidence" value="ECO:0007669"/>
    <property type="project" value="UniProtKB-EC"/>
</dbReference>
<dbReference type="GO" id="GO:0031119">
    <property type="term" value="P:tRNA pseudouridine synthesis"/>
    <property type="evidence" value="ECO:0007669"/>
    <property type="project" value="UniProtKB-UniRule"/>
</dbReference>
<dbReference type="CDD" id="cd02570">
    <property type="entry name" value="PseudoU_synth_EcTruA"/>
    <property type="match status" value="1"/>
</dbReference>
<dbReference type="FunFam" id="3.30.70.580:FF:000001">
    <property type="entry name" value="tRNA pseudouridine synthase A"/>
    <property type="match status" value="1"/>
</dbReference>
<dbReference type="Gene3D" id="3.30.70.660">
    <property type="entry name" value="Pseudouridine synthase I, catalytic domain, C-terminal subdomain"/>
    <property type="match status" value="1"/>
</dbReference>
<dbReference type="Gene3D" id="3.30.70.580">
    <property type="entry name" value="Pseudouridine synthase I, catalytic domain, N-terminal subdomain"/>
    <property type="match status" value="1"/>
</dbReference>
<dbReference type="HAMAP" id="MF_00171">
    <property type="entry name" value="TruA"/>
    <property type="match status" value="1"/>
</dbReference>
<dbReference type="InterPro" id="IPR020103">
    <property type="entry name" value="PsdUridine_synth_cat_dom_sf"/>
</dbReference>
<dbReference type="InterPro" id="IPR001406">
    <property type="entry name" value="PsdUridine_synth_TruA"/>
</dbReference>
<dbReference type="InterPro" id="IPR020097">
    <property type="entry name" value="PsdUridine_synth_TruA_a/b_dom"/>
</dbReference>
<dbReference type="InterPro" id="IPR020095">
    <property type="entry name" value="PsdUridine_synth_TruA_C"/>
</dbReference>
<dbReference type="InterPro" id="IPR020094">
    <property type="entry name" value="TruA/RsuA/RluB/E/F_N"/>
</dbReference>
<dbReference type="NCBIfam" id="TIGR00071">
    <property type="entry name" value="hisT_truA"/>
    <property type="match status" value="1"/>
</dbReference>
<dbReference type="PANTHER" id="PTHR11142">
    <property type="entry name" value="PSEUDOURIDYLATE SYNTHASE"/>
    <property type="match status" value="1"/>
</dbReference>
<dbReference type="PANTHER" id="PTHR11142:SF0">
    <property type="entry name" value="TRNA PSEUDOURIDINE SYNTHASE-LIKE 1"/>
    <property type="match status" value="1"/>
</dbReference>
<dbReference type="Pfam" id="PF01416">
    <property type="entry name" value="PseudoU_synth_1"/>
    <property type="match status" value="2"/>
</dbReference>
<dbReference type="PIRSF" id="PIRSF001430">
    <property type="entry name" value="tRNA_psdUrid_synth"/>
    <property type="match status" value="1"/>
</dbReference>
<dbReference type="SUPFAM" id="SSF55120">
    <property type="entry name" value="Pseudouridine synthase"/>
    <property type="match status" value="1"/>
</dbReference>